<comment type="function">
    <text evidence="1">This protein is one of the early assembly proteins of the 50S ribosomal subunit, although it is not seen to bind rRNA by itself. It is important during the early stages of 50S assembly.</text>
</comment>
<comment type="subunit">
    <text evidence="1">Part of the 50S ribosomal subunit.</text>
</comment>
<comment type="similarity">
    <text evidence="1">Belongs to the universal ribosomal protein uL13 family.</text>
</comment>
<accession>B2FJU4</accession>
<organism>
    <name type="scientific">Stenotrophomonas maltophilia (strain K279a)</name>
    <dbReference type="NCBI Taxonomy" id="522373"/>
    <lineage>
        <taxon>Bacteria</taxon>
        <taxon>Pseudomonadati</taxon>
        <taxon>Pseudomonadota</taxon>
        <taxon>Gammaproteobacteria</taxon>
        <taxon>Lysobacterales</taxon>
        <taxon>Lysobacteraceae</taxon>
        <taxon>Stenotrophomonas</taxon>
        <taxon>Stenotrophomonas maltophilia group</taxon>
    </lineage>
</organism>
<name>RL13_STRMK</name>
<evidence type="ECO:0000255" key="1">
    <source>
        <dbReference type="HAMAP-Rule" id="MF_01366"/>
    </source>
</evidence>
<evidence type="ECO:0000305" key="2"/>
<reference key="1">
    <citation type="journal article" date="2008" name="Genome Biol.">
        <title>The complete genome, comparative and functional analysis of Stenotrophomonas maltophilia reveals an organism heavily shielded by drug resistance determinants.</title>
        <authorList>
            <person name="Crossman L.C."/>
            <person name="Gould V.C."/>
            <person name="Dow J.M."/>
            <person name="Vernikos G.S."/>
            <person name="Okazaki A."/>
            <person name="Sebaihia M."/>
            <person name="Saunders D."/>
            <person name="Arrowsmith C."/>
            <person name="Carver T."/>
            <person name="Peters N."/>
            <person name="Adlem E."/>
            <person name="Kerhornou A."/>
            <person name="Lord A."/>
            <person name="Murphy L."/>
            <person name="Seeger K."/>
            <person name="Squares R."/>
            <person name="Rutter S."/>
            <person name="Quail M.A."/>
            <person name="Rajandream M.A."/>
            <person name="Harris D."/>
            <person name="Churcher C."/>
            <person name="Bentley S.D."/>
            <person name="Parkhill J."/>
            <person name="Thomson N.R."/>
            <person name="Avison M.B."/>
        </authorList>
    </citation>
    <scope>NUCLEOTIDE SEQUENCE [LARGE SCALE GENOMIC DNA]</scope>
    <source>
        <strain>K279a</strain>
    </source>
</reference>
<keyword id="KW-1185">Reference proteome</keyword>
<keyword id="KW-0687">Ribonucleoprotein</keyword>
<keyword id="KW-0689">Ribosomal protein</keyword>
<protein>
    <recommendedName>
        <fullName evidence="1">Large ribosomal subunit protein uL13</fullName>
    </recommendedName>
    <alternativeName>
        <fullName evidence="2">50S ribosomal protein L13</fullName>
    </alternativeName>
</protein>
<dbReference type="EMBL" id="AM743169">
    <property type="protein sequence ID" value="CAQ47687.1"/>
    <property type="molecule type" value="Genomic_DNA"/>
</dbReference>
<dbReference type="RefSeq" id="WP_005414692.1">
    <property type="nucleotide sequence ID" value="NC_010943.1"/>
</dbReference>
<dbReference type="SMR" id="B2FJU4"/>
<dbReference type="EnsemblBacteria" id="CAQ47687">
    <property type="protein sequence ID" value="CAQ47687"/>
    <property type="gene ID" value="Smlt4302"/>
</dbReference>
<dbReference type="GeneID" id="97262946"/>
<dbReference type="KEGG" id="sml:Smlt4302"/>
<dbReference type="eggNOG" id="COG0102">
    <property type="taxonomic scope" value="Bacteria"/>
</dbReference>
<dbReference type="HOGENOM" id="CLU_082184_2_2_6"/>
<dbReference type="Proteomes" id="UP000008840">
    <property type="component" value="Chromosome"/>
</dbReference>
<dbReference type="GO" id="GO:0022625">
    <property type="term" value="C:cytosolic large ribosomal subunit"/>
    <property type="evidence" value="ECO:0007669"/>
    <property type="project" value="TreeGrafter"/>
</dbReference>
<dbReference type="GO" id="GO:0003729">
    <property type="term" value="F:mRNA binding"/>
    <property type="evidence" value="ECO:0007669"/>
    <property type="project" value="TreeGrafter"/>
</dbReference>
<dbReference type="GO" id="GO:0003735">
    <property type="term" value="F:structural constituent of ribosome"/>
    <property type="evidence" value="ECO:0007669"/>
    <property type="project" value="InterPro"/>
</dbReference>
<dbReference type="GO" id="GO:0017148">
    <property type="term" value="P:negative regulation of translation"/>
    <property type="evidence" value="ECO:0007669"/>
    <property type="project" value="TreeGrafter"/>
</dbReference>
<dbReference type="GO" id="GO:0006412">
    <property type="term" value="P:translation"/>
    <property type="evidence" value="ECO:0007669"/>
    <property type="project" value="UniProtKB-UniRule"/>
</dbReference>
<dbReference type="CDD" id="cd00392">
    <property type="entry name" value="Ribosomal_L13"/>
    <property type="match status" value="1"/>
</dbReference>
<dbReference type="FunFam" id="3.90.1180.10:FF:000001">
    <property type="entry name" value="50S ribosomal protein L13"/>
    <property type="match status" value="1"/>
</dbReference>
<dbReference type="Gene3D" id="3.90.1180.10">
    <property type="entry name" value="Ribosomal protein L13"/>
    <property type="match status" value="1"/>
</dbReference>
<dbReference type="HAMAP" id="MF_01366">
    <property type="entry name" value="Ribosomal_uL13"/>
    <property type="match status" value="1"/>
</dbReference>
<dbReference type="InterPro" id="IPR005822">
    <property type="entry name" value="Ribosomal_uL13"/>
</dbReference>
<dbReference type="InterPro" id="IPR005823">
    <property type="entry name" value="Ribosomal_uL13_bac-type"/>
</dbReference>
<dbReference type="InterPro" id="IPR023563">
    <property type="entry name" value="Ribosomal_uL13_CS"/>
</dbReference>
<dbReference type="InterPro" id="IPR036899">
    <property type="entry name" value="Ribosomal_uL13_sf"/>
</dbReference>
<dbReference type="NCBIfam" id="TIGR01066">
    <property type="entry name" value="rplM_bact"/>
    <property type="match status" value="1"/>
</dbReference>
<dbReference type="PANTHER" id="PTHR11545:SF2">
    <property type="entry name" value="LARGE RIBOSOMAL SUBUNIT PROTEIN UL13M"/>
    <property type="match status" value="1"/>
</dbReference>
<dbReference type="PANTHER" id="PTHR11545">
    <property type="entry name" value="RIBOSOMAL PROTEIN L13"/>
    <property type="match status" value="1"/>
</dbReference>
<dbReference type="Pfam" id="PF00572">
    <property type="entry name" value="Ribosomal_L13"/>
    <property type="match status" value="1"/>
</dbReference>
<dbReference type="PIRSF" id="PIRSF002181">
    <property type="entry name" value="Ribosomal_L13"/>
    <property type="match status" value="1"/>
</dbReference>
<dbReference type="SUPFAM" id="SSF52161">
    <property type="entry name" value="Ribosomal protein L13"/>
    <property type="match status" value="1"/>
</dbReference>
<dbReference type="PROSITE" id="PS00783">
    <property type="entry name" value="RIBOSOMAL_L13"/>
    <property type="match status" value="1"/>
</dbReference>
<sequence>MSTFTAKNETVQRDWYLVDAEGKTLGRLATELARRLRGKHKPVYTPHVDTGDYLVVINAEKIAVTGKKLQDKMYHRFTGYIGNLKTESLAQALERHPERVIEIAVKGMLPKGPLGRQMYRKLKVYAGTEHPHAAQQPQVLDI</sequence>
<proteinExistence type="inferred from homology"/>
<feature type="chain" id="PRO_1000144184" description="Large ribosomal subunit protein uL13">
    <location>
        <begin position="1"/>
        <end position="142"/>
    </location>
</feature>
<gene>
    <name evidence="1" type="primary">rplM</name>
    <name type="ordered locus">Smlt4302</name>
</gene>